<proteinExistence type="inferred from homology"/>
<gene>
    <name evidence="1" type="primary">htpX</name>
    <name type="ordered locus">LB_174</name>
</gene>
<keyword id="KW-0997">Cell inner membrane</keyword>
<keyword id="KW-1003">Cell membrane</keyword>
<keyword id="KW-0378">Hydrolase</keyword>
<keyword id="KW-0472">Membrane</keyword>
<keyword id="KW-0479">Metal-binding</keyword>
<keyword id="KW-0482">Metalloprotease</keyword>
<keyword id="KW-0645">Protease</keyword>
<keyword id="KW-1185">Reference proteome</keyword>
<keyword id="KW-0812">Transmembrane</keyword>
<keyword id="KW-1133">Transmembrane helix</keyword>
<keyword id="KW-0862">Zinc</keyword>
<protein>
    <recommendedName>
        <fullName evidence="1">Protease HtpX homolog</fullName>
        <ecNumber evidence="1">3.4.24.-</ecNumber>
    </recommendedName>
</protein>
<organism>
    <name type="scientific">Leptospira interrogans serogroup Icterohaemorrhagiae serovar Lai (strain 56601)</name>
    <dbReference type="NCBI Taxonomy" id="189518"/>
    <lineage>
        <taxon>Bacteria</taxon>
        <taxon>Pseudomonadati</taxon>
        <taxon>Spirochaetota</taxon>
        <taxon>Spirochaetia</taxon>
        <taxon>Leptospirales</taxon>
        <taxon>Leptospiraceae</taxon>
        <taxon>Leptospira</taxon>
    </lineage>
</organism>
<dbReference type="EC" id="3.4.24.-" evidence="1"/>
<dbReference type="EMBL" id="AE010301">
    <property type="protein sequence ID" value="AAN51733.1"/>
    <property type="molecule type" value="Genomic_DNA"/>
</dbReference>
<dbReference type="RefSeq" id="NP_714718.1">
    <property type="nucleotide sequence ID" value="NC_004343.2"/>
</dbReference>
<dbReference type="RefSeq" id="WP_000264281.1">
    <property type="nucleotide sequence ID" value="NC_004343.2"/>
</dbReference>
<dbReference type="SMR" id="Q8EXN4"/>
<dbReference type="FunCoup" id="Q8EXN4">
    <property type="interactions" value="212"/>
</dbReference>
<dbReference type="STRING" id="189518.LB_174"/>
<dbReference type="MEROPS" id="M48.002"/>
<dbReference type="TCDB" id="9.B.1.1.5">
    <property type="family name" value="the integral membrane caax protease (caax protease) family"/>
</dbReference>
<dbReference type="PaxDb" id="189518-LB_174"/>
<dbReference type="EnsemblBacteria" id="AAN51733">
    <property type="protein sequence ID" value="AAN51733"/>
    <property type="gene ID" value="LB_174"/>
</dbReference>
<dbReference type="GeneID" id="61141337"/>
<dbReference type="KEGG" id="lil:LB_174"/>
<dbReference type="PATRIC" id="fig|189518.3.peg.4505"/>
<dbReference type="HOGENOM" id="CLU_042266_1_0_12"/>
<dbReference type="InParanoid" id="Q8EXN4"/>
<dbReference type="OrthoDB" id="15218at2"/>
<dbReference type="Proteomes" id="UP000001408">
    <property type="component" value="Chromosome II"/>
</dbReference>
<dbReference type="GO" id="GO:0005886">
    <property type="term" value="C:plasma membrane"/>
    <property type="evidence" value="ECO:0007669"/>
    <property type="project" value="UniProtKB-SubCell"/>
</dbReference>
<dbReference type="GO" id="GO:0004222">
    <property type="term" value="F:metalloendopeptidase activity"/>
    <property type="evidence" value="ECO:0007669"/>
    <property type="project" value="UniProtKB-UniRule"/>
</dbReference>
<dbReference type="GO" id="GO:0008270">
    <property type="term" value="F:zinc ion binding"/>
    <property type="evidence" value="ECO:0007669"/>
    <property type="project" value="UniProtKB-UniRule"/>
</dbReference>
<dbReference type="GO" id="GO:0006508">
    <property type="term" value="P:proteolysis"/>
    <property type="evidence" value="ECO:0007669"/>
    <property type="project" value="UniProtKB-KW"/>
</dbReference>
<dbReference type="CDD" id="cd07335">
    <property type="entry name" value="M48B_HtpX_like"/>
    <property type="match status" value="1"/>
</dbReference>
<dbReference type="Gene3D" id="3.30.2010.10">
    <property type="entry name" value="Metalloproteases ('zincins'), catalytic domain"/>
    <property type="match status" value="1"/>
</dbReference>
<dbReference type="HAMAP" id="MF_00188">
    <property type="entry name" value="Pept_M48_protease_HtpX"/>
    <property type="match status" value="1"/>
</dbReference>
<dbReference type="InterPro" id="IPR050083">
    <property type="entry name" value="HtpX_protease"/>
</dbReference>
<dbReference type="InterPro" id="IPR022919">
    <property type="entry name" value="Pept_M48_protease_HtpX"/>
</dbReference>
<dbReference type="InterPro" id="IPR001915">
    <property type="entry name" value="Peptidase_M48"/>
</dbReference>
<dbReference type="NCBIfam" id="NF003965">
    <property type="entry name" value="PRK05457.1"/>
    <property type="match status" value="1"/>
</dbReference>
<dbReference type="PANTHER" id="PTHR43221">
    <property type="entry name" value="PROTEASE HTPX"/>
    <property type="match status" value="1"/>
</dbReference>
<dbReference type="PANTHER" id="PTHR43221:SF1">
    <property type="entry name" value="PROTEASE HTPX"/>
    <property type="match status" value="1"/>
</dbReference>
<dbReference type="Pfam" id="PF01435">
    <property type="entry name" value="Peptidase_M48"/>
    <property type="match status" value="1"/>
</dbReference>
<comment type="cofactor">
    <cofactor evidence="1">
        <name>Zn(2+)</name>
        <dbReference type="ChEBI" id="CHEBI:29105"/>
    </cofactor>
    <text evidence="1">Binds 1 zinc ion per subunit.</text>
</comment>
<comment type="subcellular location">
    <subcellularLocation>
        <location evidence="1">Cell inner membrane</location>
        <topology evidence="1">Multi-pass membrane protein</topology>
    </subcellularLocation>
</comment>
<comment type="similarity">
    <text evidence="1">Belongs to the peptidase M48B family.</text>
</comment>
<reference key="1">
    <citation type="journal article" date="2003" name="Nature">
        <title>Unique physiological and pathogenic features of Leptospira interrogans revealed by whole-genome sequencing.</title>
        <authorList>
            <person name="Ren S.-X."/>
            <person name="Fu G."/>
            <person name="Jiang X.-G."/>
            <person name="Zeng R."/>
            <person name="Miao Y.-G."/>
            <person name="Xu H."/>
            <person name="Zhang Y.-X."/>
            <person name="Xiong H."/>
            <person name="Lu G."/>
            <person name="Lu L.-F."/>
            <person name="Jiang H.-Q."/>
            <person name="Jia J."/>
            <person name="Tu Y.-F."/>
            <person name="Jiang J.-X."/>
            <person name="Gu W.-Y."/>
            <person name="Zhang Y.-Q."/>
            <person name="Cai Z."/>
            <person name="Sheng H.-H."/>
            <person name="Yin H.-F."/>
            <person name="Zhang Y."/>
            <person name="Zhu G.-F."/>
            <person name="Wan M."/>
            <person name="Huang H.-L."/>
            <person name="Qian Z."/>
            <person name="Wang S.-Y."/>
            <person name="Ma W."/>
            <person name="Yao Z.-J."/>
            <person name="Shen Y."/>
            <person name="Qiang B.-Q."/>
            <person name="Xia Q.-C."/>
            <person name="Guo X.-K."/>
            <person name="Danchin A."/>
            <person name="Saint Girons I."/>
            <person name="Somerville R.L."/>
            <person name="Wen Y.-M."/>
            <person name="Shi M.-H."/>
            <person name="Chen Z."/>
            <person name="Xu J.-G."/>
            <person name="Zhao G.-P."/>
        </authorList>
    </citation>
    <scope>NUCLEOTIDE SEQUENCE [LARGE SCALE GENOMIC DNA]</scope>
    <source>
        <strain>56601</strain>
    </source>
</reference>
<evidence type="ECO:0000255" key="1">
    <source>
        <dbReference type="HAMAP-Rule" id="MF_00188"/>
    </source>
</evidence>
<accession>Q8EXN4</accession>
<name>HTPX_LEPIN</name>
<sequence>MWFKRIGLFLLTNILVVVTISIVTSVLGIGPYLDANGINLSSLLVFCFLWGMGGAFVSLLLSKFMAKMMMGVQVIDPRSASGAERELYSRVERLARTANLPMPEVGIYHSPEVNAFATGPSKSSSLVAVSSGLLQTMDNAEVEGVLAHELAHVANGDMVTMTLIQGVVNAFVMFFSRIISYALSTMVKDELQYTVRLIANIVLSILFSILGSIIVAYFSRTREYRADAGGAKLAGRQNMIAALEKLKRTFDAPEDERGREALATMKISGHNKWMALFSTHPPLEARIAALKNSGY</sequence>
<feature type="chain" id="PRO_0000138869" description="Protease HtpX homolog">
    <location>
        <begin position="1"/>
        <end position="295"/>
    </location>
</feature>
<feature type="transmembrane region" description="Helical" evidence="1">
    <location>
        <begin position="6"/>
        <end position="26"/>
    </location>
</feature>
<feature type="transmembrane region" description="Helical" evidence="1">
    <location>
        <begin position="40"/>
        <end position="60"/>
    </location>
</feature>
<feature type="transmembrane region" description="Helical" evidence="1">
    <location>
        <begin position="163"/>
        <end position="183"/>
    </location>
</feature>
<feature type="transmembrane region" description="Helical" evidence="1">
    <location>
        <begin position="198"/>
        <end position="218"/>
    </location>
</feature>
<feature type="active site" evidence="1">
    <location>
        <position position="149"/>
    </location>
</feature>
<feature type="binding site" evidence="1">
    <location>
        <position position="148"/>
    </location>
    <ligand>
        <name>Zn(2+)</name>
        <dbReference type="ChEBI" id="CHEBI:29105"/>
        <note>catalytic</note>
    </ligand>
</feature>
<feature type="binding site" evidence="1">
    <location>
        <position position="152"/>
    </location>
    <ligand>
        <name>Zn(2+)</name>
        <dbReference type="ChEBI" id="CHEBI:29105"/>
        <note>catalytic</note>
    </ligand>
</feature>
<feature type="binding site" evidence="1">
    <location>
        <position position="223"/>
    </location>
    <ligand>
        <name>Zn(2+)</name>
        <dbReference type="ChEBI" id="CHEBI:29105"/>
        <note>catalytic</note>
    </ligand>
</feature>